<name>ACP_PROM4</name>
<protein>
    <recommendedName>
        <fullName evidence="1">Acyl carrier protein</fullName>
        <shortName evidence="1">ACP</shortName>
    </recommendedName>
</protein>
<reference key="1">
    <citation type="journal article" date="2007" name="PLoS Genet.">
        <title>Patterns and implications of gene gain and loss in the evolution of Prochlorococcus.</title>
        <authorList>
            <person name="Kettler G.C."/>
            <person name="Martiny A.C."/>
            <person name="Huang K."/>
            <person name="Zucker J."/>
            <person name="Coleman M.L."/>
            <person name="Rodrigue S."/>
            <person name="Chen F."/>
            <person name="Lapidus A."/>
            <person name="Ferriera S."/>
            <person name="Johnson J."/>
            <person name="Steglich C."/>
            <person name="Church G.M."/>
            <person name="Richardson P."/>
            <person name="Chisholm S.W."/>
        </authorList>
    </citation>
    <scope>NUCLEOTIDE SEQUENCE [LARGE SCALE GENOMIC DNA]</scope>
    <source>
        <strain>MIT 9211</strain>
    </source>
</reference>
<dbReference type="EMBL" id="CP000878">
    <property type="protein sequence ID" value="ABX09664.1"/>
    <property type="molecule type" value="Genomic_DNA"/>
</dbReference>
<dbReference type="RefSeq" id="WP_012196284.1">
    <property type="nucleotide sequence ID" value="NC_009976.1"/>
</dbReference>
<dbReference type="SMR" id="A9BD51"/>
<dbReference type="STRING" id="93059.P9211_17331"/>
<dbReference type="KEGG" id="pmj:P9211_17331"/>
<dbReference type="eggNOG" id="COG0236">
    <property type="taxonomic scope" value="Bacteria"/>
</dbReference>
<dbReference type="HOGENOM" id="CLU_108696_5_1_3"/>
<dbReference type="OrthoDB" id="9804551at2"/>
<dbReference type="UniPathway" id="UPA00094"/>
<dbReference type="Proteomes" id="UP000000788">
    <property type="component" value="Chromosome"/>
</dbReference>
<dbReference type="GO" id="GO:0005829">
    <property type="term" value="C:cytosol"/>
    <property type="evidence" value="ECO:0007669"/>
    <property type="project" value="TreeGrafter"/>
</dbReference>
<dbReference type="GO" id="GO:0016020">
    <property type="term" value="C:membrane"/>
    <property type="evidence" value="ECO:0007669"/>
    <property type="project" value="GOC"/>
</dbReference>
<dbReference type="GO" id="GO:0000035">
    <property type="term" value="F:acyl binding"/>
    <property type="evidence" value="ECO:0007669"/>
    <property type="project" value="TreeGrafter"/>
</dbReference>
<dbReference type="GO" id="GO:0000036">
    <property type="term" value="F:acyl carrier activity"/>
    <property type="evidence" value="ECO:0007669"/>
    <property type="project" value="UniProtKB-UniRule"/>
</dbReference>
<dbReference type="GO" id="GO:0009245">
    <property type="term" value="P:lipid A biosynthetic process"/>
    <property type="evidence" value="ECO:0007669"/>
    <property type="project" value="TreeGrafter"/>
</dbReference>
<dbReference type="FunFam" id="1.10.1200.10:FF:000003">
    <property type="entry name" value="Acyl carrier protein"/>
    <property type="match status" value="1"/>
</dbReference>
<dbReference type="Gene3D" id="1.10.1200.10">
    <property type="entry name" value="ACP-like"/>
    <property type="match status" value="1"/>
</dbReference>
<dbReference type="HAMAP" id="MF_01217">
    <property type="entry name" value="Acyl_carrier"/>
    <property type="match status" value="1"/>
</dbReference>
<dbReference type="InterPro" id="IPR003231">
    <property type="entry name" value="ACP"/>
</dbReference>
<dbReference type="InterPro" id="IPR036736">
    <property type="entry name" value="ACP-like_sf"/>
</dbReference>
<dbReference type="InterPro" id="IPR009081">
    <property type="entry name" value="PP-bd_ACP"/>
</dbReference>
<dbReference type="InterPro" id="IPR006162">
    <property type="entry name" value="Ppantetheine_attach_site"/>
</dbReference>
<dbReference type="NCBIfam" id="TIGR00517">
    <property type="entry name" value="acyl_carrier"/>
    <property type="match status" value="1"/>
</dbReference>
<dbReference type="NCBIfam" id="NF002148">
    <property type="entry name" value="PRK00982.1-2"/>
    <property type="match status" value="1"/>
</dbReference>
<dbReference type="NCBIfam" id="NF002150">
    <property type="entry name" value="PRK00982.1-4"/>
    <property type="match status" value="1"/>
</dbReference>
<dbReference type="NCBIfam" id="NF002151">
    <property type="entry name" value="PRK00982.1-5"/>
    <property type="match status" value="1"/>
</dbReference>
<dbReference type="PANTHER" id="PTHR20863">
    <property type="entry name" value="ACYL CARRIER PROTEIN"/>
    <property type="match status" value="1"/>
</dbReference>
<dbReference type="PANTHER" id="PTHR20863:SF76">
    <property type="entry name" value="CARRIER DOMAIN-CONTAINING PROTEIN"/>
    <property type="match status" value="1"/>
</dbReference>
<dbReference type="Pfam" id="PF00550">
    <property type="entry name" value="PP-binding"/>
    <property type="match status" value="1"/>
</dbReference>
<dbReference type="SUPFAM" id="SSF47336">
    <property type="entry name" value="ACP-like"/>
    <property type="match status" value="1"/>
</dbReference>
<dbReference type="PROSITE" id="PS50075">
    <property type="entry name" value="CARRIER"/>
    <property type="match status" value="1"/>
</dbReference>
<dbReference type="PROSITE" id="PS00012">
    <property type="entry name" value="PHOSPHOPANTETHEINE"/>
    <property type="match status" value="1"/>
</dbReference>
<gene>
    <name evidence="1" type="primary">acpP</name>
    <name type="ordered locus">P9211_17331</name>
</gene>
<evidence type="ECO:0000255" key="1">
    <source>
        <dbReference type="HAMAP-Rule" id="MF_01217"/>
    </source>
</evidence>
<evidence type="ECO:0000255" key="2">
    <source>
        <dbReference type="PROSITE-ProRule" id="PRU00258"/>
    </source>
</evidence>
<sequence length="80" mass="8602">MSQDATLEKVRSIVSEQLSVDAGEVKLESNFQNDLGADSLDTVELVMALEEAFDIEIPDEAAEGIATVGDAVKYIEDKQG</sequence>
<accession>A9BD51</accession>
<proteinExistence type="inferred from homology"/>
<keyword id="KW-0963">Cytoplasm</keyword>
<keyword id="KW-0275">Fatty acid biosynthesis</keyword>
<keyword id="KW-0276">Fatty acid metabolism</keyword>
<keyword id="KW-0444">Lipid biosynthesis</keyword>
<keyword id="KW-0443">Lipid metabolism</keyword>
<keyword id="KW-0596">Phosphopantetheine</keyword>
<keyword id="KW-0597">Phosphoprotein</keyword>
<keyword id="KW-1185">Reference proteome</keyword>
<organism>
    <name type="scientific">Prochlorococcus marinus (strain MIT 9211)</name>
    <dbReference type="NCBI Taxonomy" id="93059"/>
    <lineage>
        <taxon>Bacteria</taxon>
        <taxon>Bacillati</taxon>
        <taxon>Cyanobacteriota</taxon>
        <taxon>Cyanophyceae</taxon>
        <taxon>Synechococcales</taxon>
        <taxon>Prochlorococcaceae</taxon>
        <taxon>Prochlorococcus</taxon>
    </lineage>
</organism>
<feature type="chain" id="PRO_1000139053" description="Acyl carrier protein">
    <location>
        <begin position="1"/>
        <end position="80"/>
    </location>
</feature>
<feature type="domain" description="Carrier" evidence="2">
    <location>
        <begin position="4"/>
        <end position="79"/>
    </location>
</feature>
<feature type="modified residue" description="O-(pantetheine 4'-phosphoryl)serine" evidence="2">
    <location>
        <position position="39"/>
    </location>
</feature>
<comment type="function">
    <text evidence="1">Carrier of the growing fatty acid chain in fatty acid biosynthesis.</text>
</comment>
<comment type="pathway">
    <text evidence="1">Lipid metabolism; fatty acid biosynthesis.</text>
</comment>
<comment type="subcellular location">
    <subcellularLocation>
        <location evidence="1">Cytoplasm</location>
    </subcellularLocation>
</comment>
<comment type="PTM">
    <text evidence="1">4'-phosphopantetheine is transferred from CoA to a specific serine of apo-ACP by AcpS. This modification is essential for activity because fatty acids are bound in thioester linkage to the sulfhydryl of the prosthetic group.</text>
</comment>
<comment type="similarity">
    <text evidence="1">Belongs to the acyl carrier protein (ACP) family.</text>
</comment>